<organism>
    <name type="scientific">Cereibacter sphaeroides (strain ATCC 17025 / ATH 2.4.3)</name>
    <name type="common">Rhodobacter sphaeroides</name>
    <dbReference type="NCBI Taxonomy" id="349102"/>
    <lineage>
        <taxon>Bacteria</taxon>
        <taxon>Pseudomonadati</taxon>
        <taxon>Pseudomonadota</taxon>
        <taxon>Alphaproteobacteria</taxon>
        <taxon>Rhodobacterales</taxon>
        <taxon>Paracoccaceae</taxon>
        <taxon>Cereibacter</taxon>
    </lineage>
</organism>
<accession>A4WUY6</accession>
<sequence length="483" mass="50779">MRAQPAASHFVDGRPLEDAAGAPIPVIHPANGEEIARLHEATPAVIEAALASGARAQKDWAALRPVERARILRRASDLIRARNEELSILETLDTGKPLQETLVADWPSGADALEFFAGLAPAVTGETVPLGQDFVYTIREPLGLCVGIGAWNYPSQIACWKAAPALALGNAMVFKPSEVTPLGALKLAEILIEAGLPPGLFNVVQGRGAVGAALVSDSRVAKVSLTGSVPTGRRVYAAAAEGVRHVTMELGGKSPLIVFDDADLESAIGAAMLGNFYSSGQICSNGTRVFVQKGIKEAFLARLAERADAIQMGDPLDPEVQMGPLVSPAQLEKVLSYIEKARAEGGRLVCGGEASVSPGCYVQPTVFADVTDGMTLAREEVFGPVMAVLDFETEEEVIARANATDFGLAAGVFTADLTRAHRVVAQLQAGTCWINAYNLTPVEAPFGGVKMSGVGRENGRAAVEHYTQVKSVYVGMGPVDAPY</sequence>
<proteinExistence type="inferred from homology"/>
<protein>
    <recommendedName>
        <fullName evidence="1">Betaine aldehyde dehydrogenase</fullName>
        <shortName evidence="1">BADH</shortName>
        <ecNumber evidence="1">1.2.1.8</ecNumber>
    </recommendedName>
</protein>
<reference key="1">
    <citation type="submission" date="2007-04" db="EMBL/GenBank/DDBJ databases">
        <title>Complete sequence of chromosome of Rhodobacter sphaeroides ATCC 17025.</title>
        <authorList>
            <consortium name="US DOE Joint Genome Institute"/>
            <person name="Copeland A."/>
            <person name="Lucas S."/>
            <person name="Lapidus A."/>
            <person name="Barry K."/>
            <person name="Detter J.C."/>
            <person name="Glavina del Rio T."/>
            <person name="Hammon N."/>
            <person name="Israni S."/>
            <person name="Dalin E."/>
            <person name="Tice H."/>
            <person name="Pitluck S."/>
            <person name="Chertkov O."/>
            <person name="Brettin T."/>
            <person name="Bruce D."/>
            <person name="Han C."/>
            <person name="Schmutz J."/>
            <person name="Larimer F."/>
            <person name="Land M."/>
            <person name="Hauser L."/>
            <person name="Kyrpides N."/>
            <person name="Kim E."/>
            <person name="Richardson P."/>
            <person name="Mackenzie C."/>
            <person name="Choudhary M."/>
            <person name="Donohue T.J."/>
            <person name="Kaplan S."/>
        </authorList>
    </citation>
    <scope>NUCLEOTIDE SEQUENCE [LARGE SCALE GENOMIC DNA]</scope>
    <source>
        <strain>ATCC 17025 / ATH 2.4.3</strain>
    </source>
</reference>
<dbReference type="EC" id="1.2.1.8" evidence="1"/>
<dbReference type="EMBL" id="CP000661">
    <property type="protein sequence ID" value="ABP71200.1"/>
    <property type="molecule type" value="Genomic_DNA"/>
</dbReference>
<dbReference type="SMR" id="A4WUY6"/>
<dbReference type="STRING" id="349102.Rsph17025_2311"/>
<dbReference type="KEGG" id="rsq:Rsph17025_2311"/>
<dbReference type="eggNOG" id="COG1012">
    <property type="taxonomic scope" value="Bacteria"/>
</dbReference>
<dbReference type="HOGENOM" id="CLU_005391_0_0_5"/>
<dbReference type="BioCyc" id="RSPH349102:G1G8M-2385-MONOMER"/>
<dbReference type="UniPathway" id="UPA00529">
    <property type="reaction ID" value="UER00386"/>
</dbReference>
<dbReference type="GO" id="GO:0008802">
    <property type="term" value="F:betaine-aldehyde dehydrogenase (NAD+) activity"/>
    <property type="evidence" value="ECO:0007669"/>
    <property type="project" value="UniProtKB-UniRule"/>
</dbReference>
<dbReference type="GO" id="GO:0046872">
    <property type="term" value="F:metal ion binding"/>
    <property type="evidence" value="ECO:0007669"/>
    <property type="project" value="UniProtKB-KW"/>
</dbReference>
<dbReference type="GO" id="GO:0019285">
    <property type="term" value="P:glycine betaine biosynthetic process from choline"/>
    <property type="evidence" value="ECO:0007669"/>
    <property type="project" value="UniProtKB-UniRule"/>
</dbReference>
<dbReference type="FunFam" id="3.40.605.10:FF:000026">
    <property type="entry name" value="Aldehyde dehydrogenase, putative"/>
    <property type="match status" value="1"/>
</dbReference>
<dbReference type="FunFam" id="3.40.309.10:FF:000012">
    <property type="entry name" value="Betaine aldehyde dehydrogenase"/>
    <property type="match status" value="1"/>
</dbReference>
<dbReference type="FunFam" id="3.40.605.10:FF:000007">
    <property type="entry name" value="NAD/NADP-dependent betaine aldehyde dehydrogenase"/>
    <property type="match status" value="1"/>
</dbReference>
<dbReference type="Gene3D" id="3.40.605.10">
    <property type="entry name" value="Aldehyde Dehydrogenase, Chain A, domain 1"/>
    <property type="match status" value="1"/>
</dbReference>
<dbReference type="Gene3D" id="3.40.309.10">
    <property type="entry name" value="Aldehyde Dehydrogenase, Chain A, domain 2"/>
    <property type="match status" value="1"/>
</dbReference>
<dbReference type="HAMAP" id="MF_00804">
    <property type="entry name" value="BADH"/>
    <property type="match status" value="1"/>
</dbReference>
<dbReference type="InterPro" id="IPR016161">
    <property type="entry name" value="Ald_DH/histidinol_DH"/>
</dbReference>
<dbReference type="InterPro" id="IPR016163">
    <property type="entry name" value="Ald_DH_C"/>
</dbReference>
<dbReference type="InterPro" id="IPR016160">
    <property type="entry name" value="Ald_DH_CS_CYS"/>
</dbReference>
<dbReference type="InterPro" id="IPR029510">
    <property type="entry name" value="Ald_DH_CS_GLU"/>
</dbReference>
<dbReference type="InterPro" id="IPR016162">
    <property type="entry name" value="Ald_DH_N"/>
</dbReference>
<dbReference type="InterPro" id="IPR015590">
    <property type="entry name" value="Aldehyde_DH_dom"/>
</dbReference>
<dbReference type="InterPro" id="IPR011264">
    <property type="entry name" value="BADH"/>
</dbReference>
<dbReference type="NCBIfam" id="TIGR01804">
    <property type="entry name" value="BADH"/>
    <property type="match status" value="1"/>
</dbReference>
<dbReference type="NCBIfam" id="NF009725">
    <property type="entry name" value="PRK13252.1"/>
    <property type="match status" value="1"/>
</dbReference>
<dbReference type="PANTHER" id="PTHR11699">
    <property type="entry name" value="ALDEHYDE DEHYDROGENASE-RELATED"/>
    <property type="match status" value="1"/>
</dbReference>
<dbReference type="Pfam" id="PF00171">
    <property type="entry name" value="Aldedh"/>
    <property type="match status" value="1"/>
</dbReference>
<dbReference type="SUPFAM" id="SSF53720">
    <property type="entry name" value="ALDH-like"/>
    <property type="match status" value="1"/>
</dbReference>
<dbReference type="PROSITE" id="PS00070">
    <property type="entry name" value="ALDEHYDE_DEHYDR_CYS"/>
    <property type="match status" value="1"/>
</dbReference>
<dbReference type="PROSITE" id="PS00687">
    <property type="entry name" value="ALDEHYDE_DEHYDR_GLU"/>
    <property type="match status" value="1"/>
</dbReference>
<keyword id="KW-0479">Metal-binding</keyword>
<keyword id="KW-0520">NAD</keyword>
<keyword id="KW-0521">NADP</keyword>
<keyword id="KW-0558">Oxidation</keyword>
<keyword id="KW-0560">Oxidoreductase</keyword>
<keyword id="KW-0630">Potassium</keyword>
<evidence type="ECO:0000255" key="1">
    <source>
        <dbReference type="HAMAP-Rule" id="MF_00804"/>
    </source>
</evidence>
<name>BETB_CERS5</name>
<comment type="function">
    <text evidence="1">Involved in the biosynthesis of the osmoprotectant glycine betaine. Catalyzes the irreversible oxidation of betaine aldehyde to the corresponding acid.</text>
</comment>
<comment type="catalytic activity">
    <reaction evidence="1">
        <text>betaine aldehyde + NAD(+) + H2O = glycine betaine + NADH + 2 H(+)</text>
        <dbReference type="Rhea" id="RHEA:15305"/>
        <dbReference type="ChEBI" id="CHEBI:15377"/>
        <dbReference type="ChEBI" id="CHEBI:15378"/>
        <dbReference type="ChEBI" id="CHEBI:15710"/>
        <dbReference type="ChEBI" id="CHEBI:17750"/>
        <dbReference type="ChEBI" id="CHEBI:57540"/>
        <dbReference type="ChEBI" id="CHEBI:57945"/>
        <dbReference type="EC" id="1.2.1.8"/>
    </reaction>
    <physiologicalReaction direction="left-to-right" evidence="1">
        <dbReference type="Rhea" id="RHEA:15306"/>
    </physiologicalReaction>
</comment>
<comment type="cofactor">
    <cofactor evidence="1">
        <name>K(+)</name>
        <dbReference type="ChEBI" id="CHEBI:29103"/>
    </cofactor>
    <text evidence="1">Binds 2 potassium ions per subunit.</text>
</comment>
<comment type="pathway">
    <text evidence="1">Amine and polyamine biosynthesis; betaine biosynthesis via choline pathway; betaine from betaine aldehyde: step 1/1.</text>
</comment>
<comment type="subunit">
    <text evidence="1">Dimer of dimers.</text>
</comment>
<comment type="similarity">
    <text evidence="1">Belongs to the aldehyde dehydrogenase family.</text>
</comment>
<feature type="chain" id="PRO_1000047056" description="Betaine aldehyde dehydrogenase">
    <location>
        <begin position="1"/>
        <end position="483"/>
    </location>
</feature>
<feature type="active site" description="Charge relay system" evidence="1">
    <location>
        <position position="161"/>
    </location>
</feature>
<feature type="active site" description="Proton acceptor" evidence="1">
    <location>
        <position position="249"/>
    </location>
</feature>
<feature type="active site" description="Nucleophile" evidence="1">
    <location>
        <position position="283"/>
    </location>
</feature>
<feature type="active site" description="Charge relay system" evidence="1">
    <location>
        <position position="457"/>
    </location>
</feature>
<feature type="binding site" evidence="1">
    <location>
        <position position="27"/>
    </location>
    <ligand>
        <name>K(+)</name>
        <dbReference type="ChEBI" id="CHEBI:29103"/>
        <label>1</label>
    </ligand>
</feature>
<feature type="binding site" evidence="1">
    <location>
        <position position="93"/>
    </location>
    <ligand>
        <name>K(+)</name>
        <dbReference type="ChEBI" id="CHEBI:29103"/>
        <label>1</label>
    </ligand>
</feature>
<feature type="binding site" evidence="1">
    <location>
        <begin position="149"/>
        <end position="151"/>
    </location>
    <ligand>
        <name>NAD(+)</name>
        <dbReference type="ChEBI" id="CHEBI:57540"/>
    </ligand>
</feature>
<feature type="binding site" evidence="1">
    <location>
        <begin position="175"/>
        <end position="178"/>
    </location>
    <ligand>
        <name>NAD(+)</name>
        <dbReference type="ChEBI" id="CHEBI:57540"/>
    </ligand>
</feature>
<feature type="binding site" evidence="1">
    <location>
        <position position="179"/>
    </location>
    <ligand>
        <name>K(+)</name>
        <dbReference type="ChEBI" id="CHEBI:29103"/>
        <label>1</label>
    </ligand>
</feature>
<feature type="binding site" evidence="1">
    <location>
        <begin position="228"/>
        <end position="231"/>
    </location>
    <ligand>
        <name>NAD(+)</name>
        <dbReference type="ChEBI" id="CHEBI:57540"/>
    </ligand>
</feature>
<feature type="binding site" evidence="1">
    <location>
        <position position="243"/>
    </location>
    <ligand>
        <name>K(+)</name>
        <dbReference type="ChEBI" id="CHEBI:29103"/>
        <label>2</label>
    </ligand>
</feature>
<feature type="binding site" evidence="1">
    <location>
        <position position="251"/>
    </location>
    <ligand>
        <name>NAD(+)</name>
        <dbReference type="ChEBI" id="CHEBI:57540"/>
    </ligand>
</feature>
<feature type="binding site" description="covalent" evidence="1">
    <location>
        <position position="283"/>
    </location>
    <ligand>
        <name>NAD(+)</name>
        <dbReference type="ChEBI" id="CHEBI:57540"/>
    </ligand>
</feature>
<feature type="binding site" evidence="1">
    <location>
        <position position="380"/>
    </location>
    <ligand>
        <name>NAD(+)</name>
        <dbReference type="ChEBI" id="CHEBI:57540"/>
    </ligand>
</feature>
<feature type="binding site" evidence="1">
    <location>
        <position position="450"/>
    </location>
    <ligand>
        <name>K(+)</name>
        <dbReference type="ChEBI" id="CHEBI:29103"/>
        <label>2</label>
    </ligand>
</feature>
<feature type="binding site" evidence="1">
    <location>
        <position position="453"/>
    </location>
    <ligand>
        <name>K(+)</name>
        <dbReference type="ChEBI" id="CHEBI:29103"/>
        <label>2</label>
    </ligand>
</feature>
<feature type="modified residue" description="Cysteine sulfenic acid (-SOH)" evidence="1">
    <location>
        <position position="283"/>
    </location>
</feature>
<gene>
    <name evidence="1" type="primary">betB</name>
    <name type="ordered locus">Rsph17025_2311</name>
</gene>